<organism>
    <name type="scientific">Epstein-Barr virus (strain B95-8)</name>
    <name type="common">HHV-4</name>
    <name type="synonym">Human herpesvirus 4</name>
    <dbReference type="NCBI Taxonomy" id="10377"/>
    <lineage>
        <taxon>Viruses</taxon>
        <taxon>Duplodnaviria</taxon>
        <taxon>Heunggongvirae</taxon>
        <taxon>Peploviricota</taxon>
        <taxon>Herviviricetes</taxon>
        <taxon>Herpesvirales</taxon>
        <taxon>Orthoherpesviridae</taxon>
        <taxon>Gammaherpesvirinae</taxon>
        <taxon>Lymphocryptovirus</taxon>
        <taxon>Lymphocryptovirus humangamma4</taxon>
        <taxon>Epstein-Barr virus (strain GD1)</taxon>
    </lineage>
</organism>
<feature type="signal peptide" evidence="1">
    <location>
        <begin position="1"/>
        <end position="17"/>
    </location>
</feature>
<feature type="chain" id="PRO_0000116182" description="Glycoprotein BILF2">
    <location>
        <begin position="18"/>
        <end position="248"/>
    </location>
</feature>
<feature type="transmembrane region" description="Helical" evidence="1">
    <location>
        <begin position="210"/>
        <end position="230"/>
    </location>
</feature>
<feature type="domain" description="Ig-like">
    <location>
        <begin position="19"/>
        <end position="125"/>
    </location>
</feature>
<feature type="region of interest" description="Disordered" evidence="3">
    <location>
        <begin position="167"/>
        <end position="191"/>
    </location>
</feature>
<feature type="compositionally biased region" description="Basic residues" evidence="3">
    <location>
        <begin position="175"/>
        <end position="188"/>
    </location>
</feature>
<feature type="glycosylation site" description="N-linked (GlcNAc...) asparagine; by host" evidence="1">
    <location>
        <position position="27"/>
    </location>
</feature>
<feature type="glycosylation site" description="N-linked (GlcNAc...) asparagine; by host" evidence="1">
    <location>
        <position position="37"/>
    </location>
</feature>
<feature type="glycosylation site" description="N-linked (GlcNAc...) asparagine; by host" evidence="1">
    <location>
        <position position="45"/>
    </location>
</feature>
<feature type="glycosylation site" description="N-linked (GlcNAc...) asparagine; by host" evidence="1">
    <location>
        <position position="73"/>
    </location>
</feature>
<feature type="glycosylation site" description="N-linked (GlcNAc...) asparagine; by host" evidence="1">
    <location>
        <position position="83"/>
    </location>
</feature>
<feature type="glycosylation site" description="N-linked (GlcNAc...) asparagine; by host" evidence="1">
    <location>
        <position position="92"/>
    </location>
</feature>
<feature type="glycosylation site" description="N-linked (GlcNAc...) asparagine; by host" evidence="1">
    <location>
        <position position="95"/>
    </location>
</feature>
<feature type="glycosylation site" description="N-linked (GlcNAc...) asparagine; by host" evidence="1">
    <location>
        <position position="104"/>
    </location>
</feature>
<feature type="glycosylation site" description="N-linked (GlcNAc...) asparagine; by host" evidence="1">
    <location>
        <position position="116"/>
    </location>
</feature>
<feature type="glycosylation site" description="N-linked (GlcNAc...) asparagine; by host" evidence="1">
    <location>
        <position position="121"/>
    </location>
</feature>
<feature type="glycosylation site" description="N-linked (GlcNAc...) asparagine; by host" evidence="1">
    <location>
        <position position="131"/>
    </location>
</feature>
<feature type="glycosylation site" description="N-linked (GlcNAc...) asparagine; by host" evidence="1">
    <location>
        <position position="144"/>
    </location>
</feature>
<feature type="disulfide bond" evidence="2">
    <location>
        <begin position="40"/>
        <end position="115"/>
    </location>
</feature>
<protein>
    <recommendedName>
        <fullName>Glycoprotein BILF2</fullName>
    </recommendedName>
</protein>
<organismHost>
    <name type="scientific">Homo sapiens</name>
    <name type="common">Human</name>
    <dbReference type="NCBI Taxonomy" id="9606"/>
</organismHost>
<name>BILF2_EBVB9</name>
<accession>P03218</accession>
<accession>Q777B4</accession>
<keyword id="KW-1015">Disulfide bond</keyword>
<keyword id="KW-0325">Glycoprotein</keyword>
<keyword id="KW-0393">Immunoglobulin domain</keyword>
<keyword id="KW-0426">Late protein</keyword>
<keyword id="KW-0472">Membrane</keyword>
<keyword id="KW-1185">Reference proteome</keyword>
<keyword id="KW-0732">Signal</keyword>
<keyword id="KW-0812">Transmembrane</keyword>
<keyword id="KW-1133">Transmembrane helix</keyword>
<reference key="1">
    <citation type="journal article" date="1984" name="Nature">
        <title>DNA sequence and expression of the B95-8 Epstein-Barr virus genome.</title>
        <authorList>
            <person name="Baer R."/>
            <person name="Bankier A.T."/>
            <person name="Biggin M.D."/>
            <person name="Deininger P.L."/>
            <person name="Farrell P.J."/>
            <person name="Gibson T.J."/>
            <person name="Hatfull G."/>
            <person name="Hudson G.S."/>
            <person name="Satchwell S.C."/>
            <person name="Seguin C."/>
            <person name="Tuffnell P.S."/>
            <person name="Barrell B.G."/>
        </authorList>
    </citation>
    <scope>NUCLEOTIDE SEQUENCE [LARGE SCALE GENOMIC DNA]</scope>
</reference>
<reference key="2">
    <citation type="journal article" date="2003" name="Virology">
        <title>Updated Epstein-Barr virus (EBV) DNA sequence and analysis of a promoter for the BART (CST, BARF0) RNAs of EBV.</title>
        <authorList>
            <person name="de Jesus O."/>
            <person name="Smith P.R."/>
            <person name="Spender L.C."/>
            <person name="Elgueta Karstegl C."/>
            <person name="Niller H.H."/>
            <person name="Huang D."/>
            <person name="Farrell P.J."/>
        </authorList>
    </citation>
    <scope>GENOME REANNOTATION</scope>
</reference>
<reference key="3">
    <citation type="journal article" date="1990" name="J. Virol.">
        <title>Characterization and expression of a glycoprotein encoded by the Epstein-Barr virus BamHI I fragment.</title>
        <authorList>
            <person name="Mackett M."/>
            <person name="Conway M.J."/>
            <person name="Arrand J.R."/>
            <person name="Haddad R.S."/>
            <person name="Hutt-Fletcher L.M."/>
        </authorList>
    </citation>
    <scope>CHARACTERIZATION</scope>
</reference>
<gene>
    <name type="ORF">BILF2</name>
</gene>
<sequence length="248" mass="27076">MTHLVLLLCCCVGSVCAFFSDLVKFENVTAHAGARVNLTCSVPSNESVSRIELGRGYTPGDGQLPLAVATSNNGTHITNGGYNYSLTLEWVNDSNTSVSLIIPNVTLAHAGYYTCNVTLRNCSVASGVHCNYSAGEEDDQYHANRTLTQRMHLTVIPATTIAPTTLVSHTTSTSHRPHRRPVSKRPTHKPVTLGPFPIDPWRPKTTWVHWALLLITCAVVAPVLLIIIISCLGWLAGWGRRRKGWIPL</sequence>
<comment type="subcellular location">
    <subcellularLocation>
        <location evidence="4">Membrane</location>
        <topology evidence="4">Single-pass membrane protein</topology>
    </subcellularLocation>
</comment>
<comment type="similarity">
    <text evidence="4">Belongs to the Epstein-Barr virus BILF2 protein family.</text>
</comment>
<proteinExistence type="evidence at protein level"/>
<dbReference type="EMBL" id="V01555">
    <property type="protein sequence ID" value="CAA24803.1"/>
    <property type="molecule type" value="Genomic_DNA"/>
</dbReference>
<dbReference type="EMBL" id="M37129">
    <property type="protein sequence ID" value="AAA45876.1"/>
    <property type="molecule type" value="Genomic_RNA"/>
</dbReference>
<dbReference type="EMBL" id="AJ507799">
    <property type="protein sequence ID" value="CAD53456.1"/>
    <property type="molecule type" value="Genomic_DNA"/>
</dbReference>
<dbReference type="PIR" id="A03780">
    <property type="entry name" value="QQBE4L"/>
</dbReference>
<dbReference type="RefSeq" id="YP_401706.1">
    <property type="nucleotide sequence ID" value="NC_007605.1"/>
</dbReference>
<dbReference type="SMR" id="P03218"/>
<dbReference type="DNASU" id="3783708"/>
<dbReference type="GeneID" id="3783708"/>
<dbReference type="KEGG" id="vg:3783708"/>
<dbReference type="Proteomes" id="UP000153037">
    <property type="component" value="Segment"/>
</dbReference>
<dbReference type="GO" id="GO:0016020">
    <property type="term" value="C:membrane"/>
    <property type="evidence" value="ECO:0007669"/>
    <property type="project" value="UniProtKB-SubCell"/>
</dbReference>
<dbReference type="Gene3D" id="2.60.40.10">
    <property type="entry name" value="Immunoglobulins"/>
    <property type="match status" value="1"/>
</dbReference>
<dbReference type="InterPro" id="IPR007110">
    <property type="entry name" value="Ig-like_dom"/>
</dbReference>
<dbReference type="InterPro" id="IPR036179">
    <property type="entry name" value="Ig-like_dom_sf"/>
</dbReference>
<dbReference type="InterPro" id="IPR013783">
    <property type="entry name" value="Ig-like_fold"/>
</dbReference>
<dbReference type="InterPro" id="IPR003599">
    <property type="entry name" value="Ig_sub"/>
</dbReference>
<dbReference type="InterPro" id="IPR013106">
    <property type="entry name" value="Ig_V-set"/>
</dbReference>
<dbReference type="Pfam" id="PF07686">
    <property type="entry name" value="V-set"/>
    <property type="match status" value="1"/>
</dbReference>
<dbReference type="SMART" id="SM00409">
    <property type="entry name" value="IG"/>
    <property type="match status" value="1"/>
</dbReference>
<dbReference type="SUPFAM" id="SSF48726">
    <property type="entry name" value="Immunoglobulin"/>
    <property type="match status" value="1"/>
</dbReference>
<dbReference type="PROSITE" id="PS50835">
    <property type="entry name" value="IG_LIKE"/>
    <property type="match status" value="1"/>
</dbReference>
<evidence type="ECO:0000255" key="1"/>
<evidence type="ECO:0000255" key="2">
    <source>
        <dbReference type="PROSITE-ProRule" id="PRU00114"/>
    </source>
</evidence>
<evidence type="ECO:0000256" key="3">
    <source>
        <dbReference type="SAM" id="MobiDB-lite"/>
    </source>
</evidence>
<evidence type="ECO:0000305" key="4"/>